<evidence type="ECO:0000250" key="1">
    <source>
        <dbReference type="UniProtKB" id="P04798"/>
    </source>
</evidence>
<evidence type="ECO:0000255" key="2"/>
<evidence type="ECO:0000255" key="3">
    <source>
        <dbReference type="PROSITE-ProRule" id="PRU00498"/>
    </source>
</evidence>
<evidence type="ECO:0000269" key="4">
    <source>
    </source>
</evidence>
<evidence type="ECO:0000269" key="5">
    <source>
    </source>
</evidence>
<evidence type="ECO:0000269" key="6">
    <source>
    </source>
</evidence>
<evidence type="ECO:0000269" key="7">
    <source>
    </source>
</evidence>
<evidence type="ECO:0000303" key="8">
    <source>
    </source>
</evidence>
<evidence type="ECO:0000305" key="9"/>
<sequence>MALAQQFQLNSITFSLLVFLGFVGVSQLIRIYWRLRYIPGPFWAKFTDVQRVFWVQTQRAHEIHRDAHGKYGDIVRFGPNMVSVADPAWIKTIYPMRPGFPKGEFYRALMPYSRQGGALPAVFTTRDENLHKMLKSPVAPLFSLSNVLTLESHVDATIKVLVEQWDRRFLDSQDSIDLADWLSFFAFDVMGTLTFSKRYGFLEEGKDVGGMINTIFTFLKTAAPMTQVPWFDNIWIKNSFAASFRKSNGSSILQIVGKHTSERLKASKSQDMNGSAMSVTKDRDMLDQFIGLAAKNPDLPPWCVTAWTFSNVAAGSDSTAAVMKKVFHSLLSHPNTLQRLMDELIQAQKTNKNMKETPFPSWRDICDLPYLDACILEGIRLHPPFCLPFERVVPKGGIMIGKTYIPEDTLIGMSPWVINHHKPTFGEDAEDWNPNRWMGPEEEKQKREAAILTFGAGKRICLGKQIAMLELKKIVATLLLTYEFEILDPERYEVENWWFFRQHGIDVRVRRRSDKE</sequence>
<proteinExistence type="evidence at protein level"/>
<organism>
    <name type="scientific">Sarocladium schorii</name>
    <name type="common">Acremonium strictum (strain IMI 501407)</name>
    <dbReference type="NCBI Taxonomy" id="2203296"/>
    <lineage>
        <taxon>Eukaryota</taxon>
        <taxon>Fungi</taxon>
        <taxon>Dikarya</taxon>
        <taxon>Ascomycota</taxon>
        <taxon>Pezizomycotina</taxon>
        <taxon>Sordariomycetes</taxon>
        <taxon>Hypocreomycetidae</taxon>
        <taxon>Hypocreales</taxon>
        <taxon>Sarocladiaceae</taxon>
        <taxon>Sarocladium</taxon>
    </lineage>
</organism>
<accession>A0A2U8U2M8</accession>
<protein>
    <recommendedName>
        <fullName evidence="8">Cytochrome P450 monooxygenase asR2</fullName>
        <ecNumber evidence="6">1.-.-.-</ecNumber>
    </recommendedName>
    <alternativeName>
        <fullName evidence="8">Xenovulene A biosynthesis cluster protein R2</fullName>
    </alternativeName>
</protein>
<name>ASR2_SARSH</name>
<keyword id="KW-0325">Glycoprotein</keyword>
<keyword id="KW-0349">Heme</keyword>
<keyword id="KW-0408">Iron</keyword>
<keyword id="KW-0472">Membrane</keyword>
<keyword id="KW-0479">Metal-binding</keyword>
<keyword id="KW-0503">Monooxygenase</keyword>
<keyword id="KW-0560">Oxidoreductase</keyword>
<keyword id="KW-0812">Transmembrane</keyword>
<keyword id="KW-1133">Transmembrane helix</keyword>
<comment type="function">
    <text evidence="4 5 6">Cytochrome P450 monooxygenase; part of the gene cluster that mediates the biosynthesis of xenovulene A, an unusual meroterpenoid that has potent inhibitory effects on the human gamma-aminobutyrate A (GABAA) benzodiazepine receptor (PubMed:29773797). The first step of xenovulene A biosynthesis is the biosynthesis of 3-methylorcinaldehyde performed by the non-reducing polyketide synthase aspks1 (PubMed:17912413, PubMed:20552126, PubMed:29773797). The salicylate hydroxylase asL1 then catalyzes the oxidative dearomatization of 3-methylorcinaldehyde to yield a dearomatized hydroxycyclohexadione (PubMed:29773797). The 2-oxoglutarate-dependent dioxygenase asL3 further catalyzes the oxidative ring expansion to provide the first tropolone metabolite (PubMed:29773797). The cytochrome P450 monooxygenase asR2 allows the synthesis of tropolone hemiacetal (PubMed:29773797). In parallel, a previously unrecognised class of terpene cyclase, asR6, produces alpha-humulene from farnesylpyrophosphate (FPP) (PubMed:29773797). The putative Diels-Alderase asR5 probably catalyzes the formation of the tropolone-humulene skeleton by linking humulene and the polyketide moiety (PubMed:29773797). Oxidative-ring contractions catalyzed by asL4 and asL6 then processively remove carbon atoms from the polyketide to yield xenovulene A (PubMed:29773797).</text>
</comment>
<comment type="cofactor">
    <cofactor evidence="1">
        <name>heme</name>
        <dbReference type="ChEBI" id="CHEBI:30413"/>
    </cofactor>
</comment>
<comment type="pathway">
    <text evidence="6">Secondary metabolite biosynthesis; terpenoid biosynthesis.</text>
</comment>
<comment type="subcellular location">
    <subcellularLocation>
        <location evidence="2">Membrane</location>
        <topology evidence="2">Single-pass membrane protein</topology>
    </subcellularLocation>
</comment>
<comment type="induction">
    <text evidence="6">Expression is significantly up-regulated under xenovulene A producing condition.</text>
</comment>
<comment type="biotechnology">
    <text evidence="7">Xenovulene A is a natural product exhibiting little structural resemblance with classical benzodiazepines yet is able to displace high-affinity ligand binding to the benzodiazepine site of the gamma-aminobutyrate A (GABAA) receptor and could be potentially used as an anti-depressant with reduced addictive properties.</text>
</comment>
<comment type="similarity">
    <text evidence="9">Belongs to the cytochrome P450 family.</text>
</comment>
<dbReference type="EC" id="1.-.-.-" evidence="6"/>
<dbReference type="EMBL" id="MG736817">
    <property type="protein sequence ID" value="AWM95791.1"/>
    <property type="molecule type" value="Genomic_DNA"/>
</dbReference>
<dbReference type="SMR" id="A0A2U8U2M8"/>
<dbReference type="GlyCosmos" id="A0A2U8U2M8">
    <property type="glycosylation" value="2 sites, No reported glycans"/>
</dbReference>
<dbReference type="UniPathway" id="UPA00213"/>
<dbReference type="GO" id="GO:0016020">
    <property type="term" value="C:membrane"/>
    <property type="evidence" value="ECO:0007669"/>
    <property type="project" value="UniProtKB-SubCell"/>
</dbReference>
<dbReference type="GO" id="GO:0020037">
    <property type="term" value="F:heme binding"/>
    <property type="evidence" value="ECO:0007669"/>
    <property type="project" value="InterPro"/>
</dbReference>
<dbReference type="GO" id="GO:0005506">
    <property type="term" value="F:iron ion binding"/>
    <property type="evidence" value="ECO:0007669"/>
    <property type="project" value="InterPro"/>
</dbReference>
<dbReference type="GO" id="GO:0004497">
    <property type="term" value="F:monooxygenase activity"/>
    <property type="evidence" value="ECO:0007669"/>
    <property type="project" value="UniProtKB-KW"/>
</dbReference>
<dbReference type="GO" id="GO:0016705">
    <property type="term" value="F:oxidoreductase activity, acting on paired donors, with incorporation or reduction of molecular oxygen"/>
    <property type="evidence" value="ECO:0007669"/>
    <property type="project" value="InterPro"/>
</dbReference>
<dbReference type="GO" id="GO:0016114">
    <property type="term" value="P:terpenoid biosynthetic process"/>
    <property type="evidence" value="ECO:0007669"/>
    <property type="project" value="UniProtKB-UniPathway"/>
</dbReference>
<dbReference type="CDD" id="cd11060">
    <property type="entry name" value="CYP57A1-like"/>
    <property type="match status" value="1"/>
</dbReference>
<dbReference type="Gene3D" id="1.10.630.10">
    <property type="entry name" value="Cytochrome P450"/>
    <property type="match status" value="1"/>
</dbReference>
<dbReference type="InterPro" id="IPR001128">
    <property type="entry name" value="Cyt_P450"/>
</dbReference>
<dbReference type="InterPro" id="IPR017972">
    <property type="entry name" value="Cyt_P450_CS"/>
</dbReference>
<dbReference type="InterPro" id="IPR002403">
    <property type="entry name" value="Cyt_P450_E_grp-IV"/>
</dbReference>
<dbReference type="InterPro" id="IPR036396">
    <property type="entry name" value="Cyt_P450_sf"/>
</dbReference>
<dbReference type="InterPro" id="IPR050121">
    <property type="entry name" value="Cytochrome_P450_monoxygenase"/>
</dbReference>
<dbReference type="PANTHER" id="PTHR24305">
    <property type="entry name" value="CYTOCHROME P450"/>
    <property type="match status" value="1"/>
</dbReference>
<dbReference type="PANTHER" id="PTHR24305:SF175">
    <property type="entry name" value="CYTOCHROME P450 MONOOXYGENASE PKFB"/>
    <property type="match status" value="1"/>
</dbReference>
<dbReference type="Pfam" id="PF00067">
    <property type="entry name" value="p450"/>
    <property type="match status" value="1"/>
</dbReference>
<dbReference type="PRINTS" id="PR00465">
    <property type="entry name" value="EP450IV"/>
</dbReference>
<dbReference type="PRINTS" id="PR00385">
    <property type="entry name" value="P450"/>
</dbReference>
<dbReference type="SUPFAM" id="SSF48264">
    <property type="entry name" value="Cytochrome P450"/>
    <property type="match status" value="1"/>
</dbReference>
<dbReference type="PROSITE" id="PS00086">
    <property type="entry name" value="CYTOCHROME_P450"/>
    <property type="match status" value="1"/>
</dbReference>
<gene>
    <name evidence="8" type="primary">asR2</name>
</gene>
<reference key="1">
    <citation type="journal article" date="2018" name="Nat. Commun.">
        <title>Three previously unrecognised classes of biosynthetic enzymes revealed during the production of xenovulene A.</title>
        <authorList>
            <person name="Schor R."/>
            <person name="Schotte C."/>
            <person name="Wibberg D."/>
            <person name="Kalinowski J."/>
            <person name="Cox R.J."/>
        </authorList>
    </citation>
    <scope>NUCLEOTIDE SEQUENCE [GENOMIC DNA]</scope>
    <scope>INDUCTION</scope>
    <scope>FUNCTION</scope>
    <scope>CATALYTIC ACTIVITY</scope>
    <scope>PATHWAY</scope>
</reference>
<reference key="2">
    <citation type="journal article" date="1997" name="J. Pharmacol. Exp. Ther.">
        <title>Regulation of neuronal and recombinant GABA(A) receptor ion channels by xenovulene A, a natural product isolated from Acremonium strictum.</title>
        <authorList>
            <person name="Thomas P."/>
            <person name="Sundaram H."/>
            <person name="Krishek B.J."/>
            <person name="Chazot P."/>
            <person name="Xie X."/>
            <person name="Bevan P."/>
            <person name="Brocchini S.J."/>
            <person name="Latham C.J."/>
            <person name="Charlton P."/>
            <person name="Moore M."/>
            <person name="Lewis S.J."/>
            <person name="Thornton D.M."/>
            <person name="Stephenson F.A."/>
            <person name="Smart T.G."/>
        </authorList>
    </citation>
    <scope>BIOTECHNOLOGY</scope>
</reference>
<reference key="3">
    <citation type="journal article" date="2007" name="Chem. Commun. (Camb.)">
        <title>Characterisation of 3-methylorcinaldehyde synthase (MOS) in Acremonium strictum: first observation of a reductive release mechanism during polyketide biosynthesis.</title>
        <authorList>
            <person name="Bailey A.M."/>
            <person name="Cox R.J."/>
            <person name="Harley K."/>
            <person name="Lazarus C.M."/>
            <person name="Simpson T.J."/>
            <person name="Skellam E."/>
        </authorList>
    </citation>
    <scope>FUNCTION</scope>
</reference>
<reference key="4">
    <citation type="journal article" date="2010" name="Chem. Commun. (Camb.)">
        <title>Catalytic role of the C-terminal domains of a fungal non-reducing polyketide synthase.</title>
        <authorList>
            <person name="Fisch K.M."/>
            <person name="Skellam E."/>
            <person name="Ivison D."/>
            <person name="Cox R.J."/>
            <person name="Bailey A.M."/>
            <person name="Lazarus C.M."/>
            <person name="Simpson T.J."/>
        </authorList>
    </citation>
    <scope>FUNCTION</scope>
</reference>
<feature type="chain" id="PRO_0000449188" description="Cytochrome P450 monooxygenase asR2">
    <location>
        <begin position="1"/>
        <end position="516"/>
    </location>
</feature>
<feature type="transmembrane region" description="Helical" evidence="2">
    <location>
        <begin position="9"/>
        <end position="29"/>
    </location>
</feature>
<feature type="binding site" description="axial binding residue" evidence="1">
    <location>
        <position position="461"/>
    </location>
    <ligand>
        <name>heme</name>
        <dbReference type="ChEBI" id="CHEBI:30413"/>
    </ligand>
    <ligandPart>
        <name>Fe</name>
        <dbReference type="ChEBI" id="CHEBI:18248"/>
    </ligandPart>
</feature>
<feature type="glycosylation site" description="N-linked (GlcNAc...) asparagine" evidence="3">
    <location>
        <position position="248"/>
    </location>
</feature>
<feature type="glycosylation site" description="N-linked (GlcNAc...) asparagine" evidence="3">
    <location>
        <position position="273"/>
    </location>
</feature>